<feature type="chain" id="PRO_1000002150" description="SsrA-binding protein">
    <location>
        <begin position="1"/>
        <end position="158"/>
    </location>
</feature>
<feature type="region of interest" description="Disordered" evidence="2">
    <location>
        <begin position="130"/>
        <end position="158"/>
    </location>
</feature>
<feature type="compositionally biased region" description="Basic and acidic residues" evidence="2">
    <location>
        <begin position="136"/>
        <end position="158"/>
    </location>
</feature>
<comment type="function">
    <text evidence="1">Required for rescue of stalled ribosomes mediated by trans-translation. Binds to transfer-messenger RNA (tmRNA), required for stable association of tmRNA with ribosomes. tmRNA and SmpB together mimic tRNA shape, replacing the anticodon stem-loop with SmpB. tmRNA is encoded by the ssrA gene; the 2 termini fold to resemble tRNA(Ala) and it encodes a 'tag peptide', a short internal open reading frame. During trans-translation Ala-aminoacylated tmRNA acts like a tRNA, entering the A-site of stalled ribosomes, displacing the stalled mRNA. The ribosome then switches to translate the ORF on the tmRNA; the nascent peptide is terminated with the 'tag peptide' encoded by the tmRNA and targeted for degradation. The ribosome is freed to recommence translation, which seems to be the essential function of trans-translation.</text>
</comment>
<comment type="subcellular location">
    <subcellularLocation>
        <location evidence="1">Cytoplasm</location>
    </subcellularLocation>
    <text evidence="1">The tmRNA-SmpB complex associates with stalled 70S ribosomes.</text>
</comment>
<comment type="similarity">
    <text evidence="1">Belongs to the SmpB family.</text>
</comment>
<protein>
    <recommendedName>
        <fullName evidence="1">SsrA-binding protein</fullName>
    </recommendedName>
    <alternativeName>
        <fullName evidence="1">Small protein B</fullName>
    </alternativeName>
</protein>
<keyword id="KW-0963">Cytoplasm</keyword>
<keyword id="KW-1185">Reference proteome</keyword>
<keyword id="KW-0694">RNA-binding</keyword>
<name>SSRP_RUEST</name>
<sequence>MAKQKTDPNYKVIAENRRARFDYAIEQDLECGIMLEGSEVKSLRAGGSNIAESYAAVEEGELWLVNSYIAPYEQAKVFKHEERRRRKLLVSRKEMADLWNATQRKGMTLVPLVLYFNHRGMAKIKIGIAKGKKNHDKREAQAKRDWSRQKQRLLKDHG</sequence>
<reference key="1">
    <citation type="submission" date="2006-05" db="EMBL/GenBank/DDBJ databases">
        <title>Complete sequence of chromosome of Silicibacter sp. TM1040.</title>
        <authorList>
            <consortium name="US DOE Joint Genome Institute"/>
            <person name="Copeland A."/>
            <person name="Lucas S."/>
            <person name="Lapidus A."/>
            <person name="Barry K."/>
            <person name="Detter J.C."/>
            <person name="Glavina del Rio T."/>
            <person name="Hammon N."/>
            <person name="Israni S."/>
            <person name="Dalin E."/>
            <person name="Tice H."/>
            <person name="Pitluck S."/>
            <person name="Brettin T."/>
            <person name="Bruce D."/>
            <person name="Han C."/>
            <person name="Tapia R."/>
            <person name="Goodwin L."/>
            <person name="Thompson L.S."/>
            <person name="Gilna P."/>
            <person name="Schmutz J."/>
            <person name="Larimer F."/>
            <person name="Land M."/>
            <person name="Hauser L."/>
            <person name="Kyrpides N."/>
            <person name="Kim E."/>
            <person name="Belas R."/>
            <person name="Moran M.A."/>
            <person name="Buchan A."/>
            <person name="Gonzalez J.M."/>
            <person name="Schell M.A."/>
            <person name="Sun F."/>
            <person name="Richardson P."/>
        </authorList>
    </citation>
    <scope>NUCLEOTIDE SEQUENCE [LARGE SCALE GENOMIC DNA]</scope>
    <source>
        <strain>TM1040</strain>
    </source>
</reference>
<dbReference type="EMBL" id="CP000377">
    <property type="protein sequence ID" value="ABF65214.1"/>
    <property type="molecule type" value="Genomic_DNA"/>
</dbReference>
<dbReference type="RefSeq" id="WP_011539801.1">
    <property type="nucleotide sequence ID" value="NC_008044.1"/>
</dbReference>
<dbReference type="SMR" id="Q1GDQ2"/>
<dbReference type="STRING" id="292414.TM1040_2482"/>
<dbReference type="KEGG" id="sit:TM1040_2482"/>
<dbReference type="eggNOG" id="COG0691">
    <property type="taxonomic scope" value="Bacteria"/>
</dbReference>
<dbReference type="HOGENOM" id="CLU_108953_0_1_5"/>
<dbReference type="OrthoDB" id="9805462at2"/>
<dbReference type="Proteomes" id="UP000000636">
    <property type="component" value="Chromosome"/>
</dbReference>
<dbReference type="GO" id="GO:0005829">
    <property type="term" value="C:cytosol"/>
    <property type="evidence" value="ECO:0007669"/>
    <property type="project" value="TreeGrafter"/>
</dbReference>
<dbReference type="GO" id="GO:0003723">
    <property type="term" value="F:RNA binding"/>
    <property type="evidence" value="ECO:0007669"/>
    <property type="project" value="UniProtKB-UniRule"/>
</dbReference>
<dbReference type="GO" id="GO:0070929">
    <property type="term" value="P:trans-translation"/>
    <property type="evidence" value="ECO:0007669"/>
    <property type="project" value="UniProtKB-UniRule"/>
</dbReference>
<dbReference type="CDD" id="cd09294">
    <property type="entry name" value="SmpB"/>
    <property type="match status" value="1"/>
</dbReference>
<dbReference type="Gene3D" id="2.40.280.10">
    <property type="match status" value="1"/>
</dbReference>
<dbReference type="HAMAP" id="MF_00023">
    <property type="entry name" value="SmpB"/>
    <property type="match status" value="1"/>
</dbReference>
<dbReference type="InterPro" id="IPR023620">
    <property type="entry name" value="SmpB"/>
</dbReference>
<dbReference type="InterPro" id="IPR000037">
    <property type="entry name" value="SsrA-bd_prot"/>
</dbReference>
<dbReference type="InterPro" id="IPR020081">
    <property type="entry name" value="SsrA-bd_prot_CS"/>
</dbReference>
<dbReference type="NCBIfam" id="NF003843">
    <property type="entry name" value="PRK05422.1"/>
    <property type="match status" value="1"/>
</dbReference>
<dbReference type="NCBIfam" id="TIGR00086">
    <property type="entry name" value="smpB"/>
    <property type="match status" value="1"/>
</dbReference>
<dbReference type="PANTHER" id="PTHR30308:SF2">
    <property type="entry name" value="SSRA-BINDING PROTEIN"/>
    <property type="match status" value="1"/>
</dbReference>
<dbReference type="PANTHER" id="PTHR30308">
    <property type="entry name" value="TMRNA-BINDING COMPONENT OF TRANS-TRANSLATION TAGGING COMPLEX"/>
    <property type="match status" value="1"/>
</dbReference>
<dbReference type="Pfam" id="PF01668">
    <property type="entry name" value="SmpB"/>
    <property type="match status" value="1"/>
</dbReference>
<dbReference type="SUPFAM" id="SSF74982">
    <property type="entry name" value="Small protein B (SmpB)"/>
    <property type="match status" value="1"/>
</dbReference>
<dbReference type="PROSITE" id="PS01317">
    <property type="entry name" value="SSRP"/>
    <property type="match status" value="1"/>
</dbReference>
<gene>
    <name evidence="1" type="primary">smpB</name>
    <name type="ordered locus">TM1040_2482</name>
</gene>
<evidence type="ECO:0000255" key="1">
    <source>
        <dbReference type="HAMAP-Rule" id="MF_00023"/>
    </source>
</evidence>
<evidence type="ECO:0000256" key="2">
    <source>
        <dbReference type="SAM" id="MobiDB-lite"/>
    </source>
</evidence>
<accession>Q1GDQ2</accession>
<proteinExistence type="inferred from homology"/>
<organism>
    <name type="scientific">Ruegeria sp. (strain TM1040)</name>
    <name type="common">Silicibacter sp.</name>
    <dbReference type="NCBI Taxonomy" id="292414"/>
    <lineage>
        <taxon>Bacteria</taxon>
        <taxon>Pseudomonadati</taxon>
        <taxon>Pseudomonadota</taxon>
        <taxon>Alphaproteobacteria</taxon>
        <taxon>Rhodobacterales</taxon>
        <taxon>Roseobacteraceae</taxon>
        <taxon>Ruegeria</taxon>
    </lineage>
</organism>